<feature type="chain" id="PRO_0000243030" description="Large ribosomal subunit protein uL5">
    <location>
        <begin position="1"/>
        <end position="181"/>
    </location>
</feature>
<gene>
    <name evidence="1" type="primary">rplE</name>
    <name type="ordered locus">Noc_2312</name>
</gene>
<evidence type="ECO:0000255" key="1">
    <source>
        <dbReference type="HAMAP-Rule" id="MF_01333"/>
    </source>
</evidence>
<evidence type="ECO:0000305" key="2"/>
<sequence>MARLQKHYRDTVINQLRERLGCQSVMAVPRIEKITLNIGAGEAVGDKKILERVMGDMARISGQKPVLTRARKSVAGFKIREDWPIGCKVTLRRKQMYEFLDRLINIAIPRIRDFRGLSPKSFDGRGNYNMGIREQIIFPEIDYDQIDAIRGMNITITTTAKTDEEGQALLRAFNFPFRTHT</sequence>
<accession>Q3J8S6</accession>
<dbReference type="EMBL" id="CP000127">
    <property type="protein sequence ID" value="ABA58770.1"/>
    <property type="molecule type" value="Genomic_DNA"/>
</dbReference>
<dbReference type="RefSeq" id="WP_002809999.1">
    <property type="nucleotide sequence ID" value="NC_007484.1"/>
</dbReference>
<dbReference type="SMR" id="Q3J8S6"/>
<dbReference type="FunCoup" id="Q3J8S6">
    <property type="interactions" value="649"/>
</dbReference>
<dbReference type="STRING" id="323261.Noc_2312"/>
<dbReference type="KEGG" id="noc:Noc_2312"/>
<dbReference type="eggNOG" id="COG0094">
    <property type="taxonomic scope" value="Bacteria"/>
</dbReference>
<dbReference type="HOGENOM" id="CLU_061015_2_1_6"/>
<dbReference type="InParanoid" id="Q3J8S6"/>
<dbReference type="Proteomes" id="UP000006838">
    <property type="component" value="Chromosome"/>
</dbReference>
<dbReference type="GO" id="GO:1990904">
    <property type="term" value="C:ribonucleoprotein complex"/>
    <property type="evidence" value="ECO:0007669"/>
    <property type="project" value="UniProtKB-KW"/>
</dbReference>
<dbReference type="GO" id="GO:0005840">
    <property type="term" value="C:ribosome"/>
    <property type="evidence" value="ECO:0007669"/>
    <property type="project" value="UniProtKB-KW"/>
</dbReference>
<dbReference type="GO" id="GO:0019843">
    <property type="term" value="F:rRNA binding"/>
    <property type="evidence" value="ECO:0007669"/>
    <property type="project" value="UniProtKB-UniRule"/>
</dbReference>
<dbReference type="GO" id="GO:0003735">
    <property type="term" value="F:structural constituent of ribosome"/>
    <property type="evidence" value="ECO:0007669"/>
    <property type="project" value="InterPro"/>
</dbReference>
<dbReference type="GO" id="GO:0000049">
    <property type="term" value="F:tRNA binding"/>
    <property type="evidence" value="ECO:0007669"/>
    <property type="project" value="UniProtKB-UniRule"/>
</dbReference>
<dbReference type="GO" id="GO:0006412">
    <property type="term" value="P:translation"/>
    <property type="evidence" value="ECO:0007669"/>
    <property type="project" value="UniProtKB-UniRule"/>
</dbReference>
<dbReference type="FunFam" id="3.30.1440.10:FF:000001">
    <property type="entry name" value="50S ribosomal protein L5"/>
    <property type="match status" value="1"/>
</dbReference>
<dbReference type="Gene3D" id="3.30.1440.10">
    <property type="match status" value="1"/>
</dbReference>
<dbReference type="HAMAP" id="MF_01333_B">
    <property type="entry name" value="Ribosomal_uL5_B"/>
    <property type="match status" value="1"/>
</dbReference>
<dbReference type="InterPro" id="IPR002132">
    <property type="entry name" value="Ribosomal_uL5"/>
</dbReference>
<dbReference type="InterPro" id="IPR020930">
    <property type="entry name" value="Ribosomal_uL5_bac-type"/>
</dbReference>
<dbReference type="InterPro" id="IPR031309">
    <property type="entry name" value="Ribosomal_uL5_C"/>
</dbReference>
<dbReference type="InterPro" id="IPR020929">
    <property type="entry name" value="Ribosomal_uL5_CS"/>
</dbReference>
<dbReference type="InterPro" id="IPR022803">
    <property type="entry name" value="Ribosomal_uL5_dom_sf"/>
</dbReference>
<dbReference type="InterPro" id="IPR031310">
    <property type="entry name" value="Ribosomal_uL5_N"/>
</dbReference>
<dbReference type="NCBIfam" id="NF000585">
    <property type="entry name" value="PRK00010.1"/>
    <property type="match status" value="1"/>
</dbReference>
<dbReference type="PANTHER" id="PTHR11994">
    <property type="entry name" value="60S RIBOSOMAL PROTEIN L11-RELATED"/>
    <property type="match status" value="1"/>
</dbReference>
<dbReference type="Pfam" id="PF00281">
    <property type="entry name" value="Ribosomal_L5"/>
    <property type="match status" value="1"/>
</dbReference>
<dbReference type="Pfam" id="PF00673">
    <property type="entry name" value="Ribosomal_L5_C"/>
    <property type="match status" value="1"/>
</dbReference>
<dbReference type="PIRSF" id="PIRSF002161">
    <property type="entry name" value="Ribosomal_L5"/>
    <property type="match status" value="1"/>
</dbReference>
<dbReference type="SUPFAM" id="SSF55282">
    <property type="entry name" value="RL5-like"/>
    <property type="match status" value="1"/>
</dbReference>
<dbReference type="PROSITE" id="PS00358">
    <property type="entry name" value="RIBOSOMAL_L5"/>
    <property type="match status" value="1"/>
</dbReference>
<name>RL5_NITOC</name>
<comment type="function">
    <text evidence="1">This is one of the proteins that bind and probably mediate the attachment of the 5S RNA into the large ribosomal subunit, where it forms part of the central protuberance. In the 70S ribosome it contacts protein S13 of the 30S subunit (bridge B1b), connecting the 2 subunits; this bridge is implicated in subunit movement. Contacts the P site tRNA; the 5S rRNA and some of its associated proteins might help stabilize positioning of ribosome-bound tRNAs.</text>
</comment>
<comment type="subunit">
    <text evidence="1">Part of the 50S ribosomal subunit; part of the 5S rRNA/L5/L18/L25 subcomplex. Contacts the 5S rRNA and the P site tRNA. Forms a bridge to the 30S subunit in the 70S ribosome.</text>
</comment>
<comment type="similarity">
    <text evidence="1">Belongs to the universal ribosomal protein uL5 family.</text>
</comment>
<reference key="1">
    <citation type="journal article" date="2006" name="Appl. Environ. Microbiol.">
        <title>Complete genome sequence of the marine, chemolithoautotrophic, ammonia-oxidizing bacterium Nitrosococcus oceani ATCC 19707.</title>
        <authorList>
            <person name="Klotz M.G."/>
            <person name="Arp D.J."/>
            <person name="Chain P.S.G."/>
            <person name="El-Sheikh A.F."/>
            <person name="Hauser L.J."/>
            <person name="Hommes N.G."/>
            <person name="Larimer F.W."/>
            <person name="Malfatti S.A."/>
            <person name="Norton J.M."/>
            <person name="Poret-Peterson A.T."/>
            <person name="Vergez L.M."/>
            <person name="Ward B.B."/>
        </authorList>
    </citation>
    <scope>NUCLEOTIDE SEQUENCE [LARGE SCALE GENOMIC DNA]</scope>
    <source>
        <strain>ATCC 19707 / BCRC 17464 / JCM 30415 / NCIMB 11848 / C-107</strain>
    </source>
</reference>
<proteinExistence type="inferred from homology"/>
<keyword id="KW-1185">Reference proteome</keyword>
<keyword id="KW-0687">Ribonucleoprotein</keyword>
<keyword id="KW-0689">Ribosomal protein</keyword>
<keyword id="KW-0694">RNA-binding</keyword>
<keyword id="KW-0699">rRNA-binding</keyword>
<keyword id="KW-0820">tRNA-binding</keyword>
<protein>
    <recommendedName>
        <fullName evidence="1">Large ribosomal subunit protein uL5</fullName>
    </recommendedName>
    <alternativeName>
        <fullName evidence="2">50S ribosomal protein L5</fullName>
    </alternativeName>
</protein>
<organism>
    <name type="scientific">Nitrosococcus oceani (strain ATCC 19707 / BCRC 17464 / JCM 30415 / NCIMB 11848 / C-107)</name>
    <dbReference type="NCBI Taxonomy" id="323261"/>
    <lineage>
        <taxon>Bacteria</taxon>
        <taxon>Pseudomonadati</taxon>
        <taxon>Pseudomonadota</taxon>
        <taxon>Gammaproteobacteria</taxon>
        <taxon>Chromatiales</taxon>
        <taxon>Chromatiaceae</taxon>
        <taxon>Nitrosococcus</taxon>
    </lineage>
</organism>